<protein>
    <recommendedName>
        <fullName evidence="1">RNA-free ribonuclease P</fullName>
        <shortName evidence="1">RNA-free RNase P</shortName>
        <ecNumber evidence="1">3.1.26.5</ecNumber>
    </recommendedName>
    <alternativeName>
        <fullName evidence="1">Protein-only RNase P</fullName>
    </alternativeName>
</protein>
<gene>
    <name type="ordered locus">Hhal_2243</name>
</gene>
<dbReference type="EC" id="3.1.26.5" evidence="1"/>
<dbReference type="EMBL" id="CP000544">
    <property type="protein sequence ID" value="ABM63007.1"/>
    <property type="molecule type" value="Genomic_DNA"/>
</dbReference>
<dbReference type="RefSeq" id="WP_011815029.1">
    <property type="nucleotide sequence ID" value="NC_008789.1"/>
</dbReference>
<dbReference type="PDB" id="7OG5">
    <property type="method" value="EM"/>
    <property type="resolution" value="3.37 A"/>
    <property type="chains" value="A/B/C/D/E/F/G/H/I/J/K/L=2-206"/>
</dbReference>
<dbReference type="PDBsum" id="7OG5"/>
<dbReference type="EMDB" id="EMD-12878"/>
<dbReference type="SMR" id="A1WZ95"/>
<dbReference type="STRING" id="349124.Hhal_2243"/>
<dbReference type="KEGG" id="hha:Hhal_2243"/>
<dbReference type="eggNOG" id="COG1458">
    <property type="taxonomic scope" value="Bacteria"/>
</dbReference>
<dbReference type="HOGENOM" id="CLU_109672_0_0_6"/>
<dbReference type="OrthoDB" id="263154at2"/>
<dbReference type="Proteomes" id="UP000000647">
    <property type="component" value="Chromosome"/>
</dbReference>
<dbReference type="GO" id="GO:0004526">
    <property type="term" value="F:ribonuclease P activity"/>
    <property type="evidence" value="ECO:0007669"/>
    <property type="project" value="UniProtKB-UniRule"/>
</dbReference>
<dbReference type="GO" id="GO:0001682">
    <property type="term" value="P:tRNA 5'-leader removal"/>
    <property type="evidence" value="ECO:0007669"/>
    <property type="project" value="UniProtKB-UniRule"/>
</dbReference>
<dbReference type="CDD" id="cd18691">
    <property type="entry name" value="PIN_VapC-like"/>
    <property type="match status" value="1"/>
</dbReference>
<dbReference type="HAMAP" id="MF_01078">
    <property type="entry name" value="RNA_free_RNase_P"/>
    <property type="match status" value="1"/>
</dbReference>
<dbReference type="InterPro" id="IPR029060">
    <property type="entry name" value="PIN-like_dom_sf"/>
</dbReference>
<dbReference type="InterPro" id="IPR014856">
    <property type="entry name" value="RNA_free_RNase_P"/>
</dbReference>
<dbReference type="NCBIfam" id="NF003344">
    <property type="entry name" value="PRK04358.1-5"/>
    <property type="match status" value="1"/>
</dbReference>
<dbReference type="NCBIfam" id="TIGR03875">
    <property type="entry name" value="RNA_lig_partner"/>
    <property type="match status" value="1"/>
</dbReference>
<dbReference type="PANTHER" id="PTHR41173:SF1">
    <property type="entry name" value="RNA-FREE RIBONUCLEASE P"/>
    <property type="match status" value="1"/>
</dbReference>
<dbReference type="PANTHER" id="PTHR41173">
    <property type="entry name" value="UPF0278 PROTEIN TK1425"/>
    <property type="match status" value="1"/>
</dbReference>
<dbReference type="Pfam" id="PF08745">
    <property type="entry name" value="PIN_5"/>
    <property type="match status" value="1"/>
</dbReference>
<dbReference type="SUPFAM" id="SSF88723">
    <property type="entry name" value="PIN domain-like"/>
    <property type="match status" value="1"/>
</dbReference>
<sequence>MRRFVLDTSVFTNPDVYLRFDEEPMQAISVFLGLARRADAEFYMPGPVYQELCNLRSMDLIGAEFETEVYIRSPRRFSMTIPSEVLYEFIEEVRTRIQRGLRIAEEHARQAGQAESLPPELITQLRERYREAMRRGILDSREDIDVVLLAYELDATLVSADEGMRKFAERIGIKLVNPRYLRGVMQNLAGDDPGHAPPCGPDQPAG</sequence>
<keyword id="KW-0002">3D-structure</keyword>
<keyword id="KW-0255">Endonuclease</keyword>
<keyword id="KW-0378">Hydrolase</keyword>
<keyword id="KW-0540">Nuclease</keyword>
<keyword id="KW-1185">Reference proteome</keyword>
<keyword id="KW-0819">tRNA processing</keyword>
<accession>A1WZ95</accession>
<reference key="1">
    <citation type="submission" date="2006-12" db="EMBL/GenBank/DDBJ databases">
        <title>Complete sequence of Halorhodospira halophila SL1.</title>
        <authorList>
            <consortium name="US DOE Joint Genome Institute"/>
            <person name="Copeland A."/>
            <person name="Lucas S."/>
            <person name="Lapidus A."/>
            <person name="Barry K."/>
            <person name="Detter J.C."/>
            <person name="Glavina del Rio T."/>
            <person name="Hammon N."/>
            <person name="Israni S."/>
            <person name="Dalin E."/>
            <person name="Tice H."/>
            <person name="Pitluck S."/>
            <person name="Saunders E."/>
            <person name="Brettin T."/>
            <person name="Bruce D."/>
            <person name="Han C."/>
            <person name="Tapia R."/>
            <person name="Schmutz J."/>
            <person name="Larimer F."/>
            <person name="Land M."/>
            <person name="Hauser L."/>
            <person name="Kyrpides N."/>
            <person name="Mikhailova N."/>
            <person name="Hoff W."/>
            <person name="Richardson P."/>
        </authorList>
    </citation>
    <scope>NUCLEOTIDE SEQUENCE [LARGE SCALE GENOMIC DNA]</scope>
    <source>
        <strain>DSM 244 / SL1</strain>
    </source>
</reference>
<evidence type="ECO:0000255" key="1">
    <source>
        <dbReference type="HAMAP-Rule" id="MF_01078"/>
    </source>
</evidence>
<evidence type="ECO:0000256" key="2">
    <source>
        <dbReference type="SAM" id="MobiDB-lite"/>
    </source>
</evidence>
<evidence type="ECO:0007829" key="3">
    <source>
        <dbReference type="PDB" id="7OG5"/>
    </source>
</evidence>
<feature type="chain" id="PRO_0000366686" description="RNA-free ribonuclease P">
    <location>
        <begin position="1"/>
        <end position="206"/>
    </location>
</feature>
<feature type="region of interest" description="Disordered" evidence="2">
    <location>
        <begin position="187"/>
        <end position="206"/>
    </location>
</feature>
<feature type="compositionally biased region" description="Pro residues" evidence="2">
    <location>
        <begin position="195"/>
        <end position="206"/>
    </location>
</feature>
<feature type="helix" evidence="3">
    <location>
        <begin position="8"/>
        <end position="11"/>
    </location>
</feature>
<feature type="turn" evidence="3">
    <location>
        <begin position="14"/>
        <end position="16"/>
    </location>
</feature>
<feature type="turn" evidence="3">
    <location>
        <begin position="18"/>
        <end position="20"/>
    </location>
</feature>
<feature type="helix" evidence="3">
    <location>
        <begin position="24"/>
        <end position="34"/>
    </location>
</feature>
<feature type="turn" evidence="3">
    <location>
        <begin position="35"/>
        <end position="37"/>
    </location>
</feature>
<feature type="strand" evidence="3">
    <location>
        <begin position="42"/>
        <end position="44"/>
    </location>
</feature>
<feature type="helix" evidence="3">
    <location>
        <begin position="46"/>
        <end position="55"/>
    </location>
</feature>
<feature type="helix" evidence="3">
    <location>
        <begin position="59"/>
        <end position="68"/>
    </location>
</feature>
<feature type="strand" evidence="3">
    <location>
        <begin position="69"/>
        <end position="71"/>
    </location>
</feature>
<feature type="helix" evidence="3">
    <location>
        <begin position="83"/>
        <end position="95"/>
    </location>
</feature>
<feature type="helix" evidence="3">
    <location>
        <begin position="126"/>
        <end position="130"/>
    </location>
</feature>
<feature type="helix" evidence="3">
    <location>
        <begin position="133"/>
        <end position="153"/>
    </location>
</feature>
<feature type="helix" evidence="3">
    <location>
        <begin position="162"/>
        <end position="171"/>
    </location>
</feature>
<feature type="helix" evidence="3">
    <location>
        <begin position="178"/>
        <end position="180"/>
    </location>
</feature>
<feature type="helix" evidence="3">
    <location>
        <begin position="181"/>
        <end position="185"/>
    </location>
</feature>
<proteinExistence type="evidence at protein level"/>
<organism>
    <name type="scientific">Halorhodospira halophila (strain DSM 244 / SL1)</name>
    <name type="common">Ectothiorhodospira halophila (strain DSM 244 / SL1)</name>
    <dbReference type="NCBI Taxonomy" id="349124"/>
    <lineage>
        <taxon>Bacteria</taxon>
        <taxon>Pseudomonadati</taxon>
        <taxon>Pseudomonadota</taxon>
        <taxon>Gammaproteobacteria</taxon>
        <taxon>Chromatiales</taxon>
        <taxon>Ectothiorhodospiraceae</taxon>
        <taxon>Halorhodospira</taxon>
    </lineage>
</organism>
<comment type="function">
    <text evidence="1">RNA-free RNase P that catalyzes the removal of the 5'-leader sequence from pre-tRNA to produce the mature 5'-terminus.</text>
</comment>
<comment type="catalytic activity">
    <reaction evidence="1">
        <text>Endonucleolytic cleavage of RNA, removing 5'-extranucleotides from tRNA precursor.</text>
        <dbReference type="EC" id="3.1.26.5"/>
    </reaction>
</comment>
<comment type="similarity">
    <text evidence="1">Belongs to the HARP family.</text>
</comment>
<name>RFRNP_HALHL</name>